<dbReference type="EMBL" id="M28846">
    <property type="protein sequence ID" value="AAA26244.1"/>
    <property type="molecule type" value="Genomic_DNA"/>
</dbReference>
<dbReference type="PIR" id="A33966">
    <property type="entry name" value="A33966"/>
</dbReference>
<dbReference type="SMR" id="P33985"/>
<dbReference type="STRING" id="382.DU99_02040"/>
<dbReference type="GO" id="GO:0000428">
    <property type="term" value="C:DNA-directed RNA polymerase complex"/>
    <property type="evidence" value="ECO:0007669"/>
    <property type="project" value="UniProtKB-KW"/>
</dbReference>
<dbReference type="GO" id="GO:0003677">
    <property type="term" value="F:DNA binding"/>
    <property type="evidence" value="ECO:0007669"/>
    <property type="project" value="UniProtKB-KW"/>
</dbReference>
<dbReference type="GO" id="GO:0001216">
    <property type="term" value="F:DNA-binding transcription activator activity"/>
    <property type="evidence" value="ECO:0007669"/>
    <property type="project" value="InterPro"/>
</dbReference>
<dbReference type="GO" id="GO:0016779">
    <property type="term" value="F:nucleotidyltransferase activity"/>
    <property type="evidence" value="ECO:0007669"/>
    <property type="project" value="UniProtKB-KW"/>
</dbReference>
<dbReference type="GO" id="GO:0016987">
    <property type="term" value="F:sigma factor activity"/>
    <property type="evidence" value="ECO:0007669"/>
    <property type="project" value="UniProtKB-KW"/>
</dbReference>
<dbReference type="GO" id="GO:0006352">
    <property type="term" value="P:DNA-templated transcription initiation"/>
    <property type="evidence" value="ECO:0007669"/>
    <property type="project" value="InterPro"/>
</dbReference>
<dbReference type="GO" id="GO:0009399">
    <property type="term" value="P:nitrogen fixation"/>
    <property type="evidence" value="ECO:0007669"/>
    <property type="project" value="UniProtKB-KW"/>
</dbReference>
<dbReference type="Gene3D" id="1.10.10.60">
    <property type="entry name" value="Homeodomain-like"/>
    <property type="match status" value="1"/>
</dbReference>
<dbReference type="Gene3D" id="1.10.10.1330">
    <property type="entry name" value="RNA polymerase sigma-54 factor, core-binding domain"/>
    <property type="match status" value="1"/>
</dbReference>
<dbReference type="InterPro" id="IPR000394">
    <property type="entry name" value="RNA_pol_sigma_54"/>
</dbReference>
<dbReference type="InterPro" id="IPR007046">
    <property type="entry name" value="RNA_pol_sigma_54_core-bd"/>
</dbReference>
<dbReference type="InterPro" id="IPR007634">
    <property type="entry name" value="RNA_pol_sigma_54_DNA-bd"/>
</dbReference>
<dbReference type="InterPro" id="IPR038709">
    <property type="entry name" value="RpoN_core-bd_sf"/>
</dbReference>
<dbReference type="NCBIfam" id="NF004596">
    <property type="entry name" value="PRK05932.1-3"/>
    <property type="match status" value="1"/>
</dbReference>
<dbReference type="NCBIfam" id="NF009118">
    <property type="entry name" value="PRK12469.1"/>
    <property type="match status" value="1"/>
</dbReference>
<dbReference type="NCBIfam" id="TIGR02395">
    <property type="entry name" value="rpoN_sigma"/>
    <property type="match status" value="1"/>
</dbReference>
<dbReference type="PANTHER" id="PTHR32248">
    <property type="entry name" value="RNA POLYMERASE SIGMA-54 FACTOR"/>
    <property type="match status" value="1"/>
</dbReference>
<dbReference type="PANTHER" id="PTHR32248:SF4">
    <property type="entry name" value="RNA POLYMERASE SIGMA-54 FACTOR"/>
    <property type="match status" value="1"/>
</dbReference>
<dbReference type="Pfam" id="PF00309">
    <property type="entry name" value="Sigma54_AID"/>
    <property type="match status" value="1"/>
</dbReference>
<dbReference type="Pfam" id="PF04963">
    <property type="entry name" value="Sigma54_CBD"/>
    <property type="match status" value="1"/>
</dbReference>
<dbReference type="Pfam" id="PF04552">
    <property type="entry name" value="Sigma54_DBD"/>
    <property type="match status" value="1"/>
</dbReference>
<dbReference type="PIRSF" id="PIRSF000774">
    <property type="entry name" value="RpoN"/>
    <property type="match status" value="1"/>
</dbReference>
<dbReference type="PRINTS" id="PR00045">
    <property type="entry name" value="SIGMA54FCT"/>
</dbReference>
<dbReference type="PROSITE" id="PS00717">
    <property type="entry name" value="SIGMA54_1"/>
    <property type="match status" value="1"/>
</dbReference>
<dbReference type="PROSITE" id="PS00718">
    <property type="entry name" value="SIGMA54_2"/>
    <property type="match status" value="1"/>
</dbReference>
<dbReference type="PROSITE" id="PS50044">
    <property type="entry name" value="SIGMA54_3"/>
    <property type="match status" value="1"/>
</dbReference>
<keyword id="KW-0238">DNA-binding</keyword>
<keyword id="KW-0240">DNA-directed RNA polymerase</keyword>
<keyword id="KW-0535">Nitrogen fixation</keyword>
<keyword id="KW-0548">Nucleotidyltransferase</keyword>
<keyword id="KW-0731">Sigma factor</keyword>
<keyword id="KW-0804">Transcription</keyword>
<keyword id="KW-0805">Transcription regulation</keyword>
<keyword id="KW-0808">Transferase</keyword>
<name>RP54_RHIML</name>
<comment type="function">
    <text>Sigma factors are initiation factors that promote the attachment of RNA polymerase to specific initiation sites and are then released. This sigma factor is responsible for the expression of the nitrogen fixation genes (nif operon), glnA and dctA for dicarboxylate transport. The open complex (sigma-54 and core RNA polymerase) serves as the receptor for receipt of the melting signal from the remotely bound activator proteins NifA, NtrC, or DctD for the expression of the regulated proteins.</text>
</comment>
<comment type="similarity">
    <text evidence="3">Belongs to the sigma-54 factor family.</text>
</comment>
<proteinExistence type="inferred from homology"/>
<evidence type="ECO:0000255" key="1"/>
<evidence type="ECO:0000256" key="2">
    <source>
        <dbReference type="SAM" id="MobiDB-lite"/>
    </source>
</evidence>
<evidence type="ECO:0000305" key="3"/>
<gene>
    <name type="primary">rpoN</name>
    <name type="synonym">ntrA</name>
</gene>
<feature type="chain" id="PRO_0000205539" description="RNA polymerase sigma-54 factor">
    <location>
        <begin position="1"/>
        <end position="513"/>
    </location>
</feature>
<feature type="DNA-binding region" description="H-T-H motif" evidence="1">
    <location>
        <begin position="394"/>
        <end position="413"/>
    </location>
</feature>
<feature type="region of interest" description="Disordered" evidence="2">
    <location>
        <begin position="52"/>
        <end position="137"/>
    </location>
</feature>
<feature type="short sequence motif" description="RPON box">
    <location>
        <begin position="483"/>
        <end position="491"/>
    </location>
</feature>
<feature type="compositionally biased region" description="Acidic residues" evidence="2">
    <location>
        <begin position="73"/>
        <end position="86"/>
    </location>
</feature>
<reference key="1">
    <citation type="journal article" date="1989" name="J. Bacteriol.">
        <title>Regulation of glutamine synthetase II activity in Rhizobium meliloti 104A14.</title>
        <authorList>
            <person name="Shatters R.G."/>
            <person name="Somerville J.E."/>
            <person name="Kahn M.L."/>
        </authorList>
    </citation>
    <scope>NUCLEOTIDE SEQUENCE [GENOMIC DNA]</scope>
    <source>
        <strain>104A14</strain>
    </source>
</reference>
<organism>
    <name type="scientific">Rhizobium meliloti</name>
    <name type="common">Ensifer meliloti</name>
    <name type="synonym">Sinorhizobium meliloti</name>
    <dbReference type="NCBI Taxonomy" id="382"/>
    <lineage>
        <taxon>Bacteria</taxon>
        <taxon>Pseudomonadati</taxon>
        <taxon>Pseudomonadota</taxon>
        <taxon>Alphaproteobacteria</taxon>
        <taxon>Hyphomicrobiales</taxon>
        <taxon>Rhizobiaceae</taxon>
        <taxon>Sinorhizobium/Ensifer group</taxon>
        <taxon>Sinorhizobium</taxon>
    </lineage>
</organism>
<accession>P33985</accession>
<sequence length="513" mass="56822">MALSASLHLRQSQSLVMTPQLMQSIQLLQMNHLELTQFIAQEIEKNPLLEVQSPSDEASTAERGDSGPQPEEAGSEIDEGAGEGDVYDSATSRSGERLSDGLDSDFANVFPDDTTPQRADAPELLGQWKSMPGASDGESYDLDDFVASRKTLREALIEQLPFALESGSHRLIAQYLIDQLDDAGYLHADLAETAQRLASASEDVTRVLDVLQQFDPPGVFARTLGECLGLQLRARNRLDPAMEALVGNLDLLARRDFASLKKICGVDEEDLIDMFAEIRKLDPKPGTSFETGSFETIIPDAVVRTAPDGGWLVELNPDALPRVLVNHEYFAEISRSCRKSSGEQIFLNECLQNANWLTRSLDQRARTIMKVASEIVRQQDAFLMHGVGHLRPLNLRTVADAIKMHESTVSRVTSNKYMLTPRGLYELKYFFTASIGSAENGDAHSAESVRHRIRTMVNQESADAVLSDDDIVDILKKAGVDIARRTVAKYREAMHIPSCVQRRREKRALARVG</sequence>
<protein>
    <recommendedName>
        <fullName>RNA polymerase sigma-54 factor</fullName>
    </recommendedName>
</protein>